<organism>
    <name type="scientific">Saccharomyces cerevisiae (strain JAY291)</name>
    <name type="common">Baker's yeast</name>
    <dbReference type="NCBI Taxonomy" id="574961"/>
    <lineage>
        <taxon>Eukaryota</taxon>
        <taxon>Fungi</taxon>
        <taxon>Dikarya</taxon>
        <taxon>Ascomycota</taxon>
        <taxon>Saccharomycotina</taxon>
        <taxon>Saccharomycetes</taxon>
        <taxon>Saccharomycetales</taxon>
        <taxon>Saccharomycetaceae</taxon>
        <taxon>Saccharomyces</taxon>
    </lineage>
</organism>
<reference key="1">
    <citation type="journal article" date="2009" name="Genome Res.">
        <title>Genome structure of a Saccharomyces cerevisiae strain widely used in bioethanol production.</title>
        <authorList>
            <person name="Argueso J.L."/>
            <person name="Carazzolle M.F."/>
            <person name="Mieczkowski P.A."/>
            <person name="Duarte F.M."/>
            <person name="Netto O.V.C."/>
            <person name="Missawa S.K."/>
            <person name="Galzerani F."/>
            <person name="Costa G.G.L."/>
            <person name="Vidal R.O."/>
            <person name="Noronha M.F."/>
            <person name="Dominska M."/>
            <person name="Andrietta M.G.S."/>
            <person name="Andrietta S.R."/>
            <person name="Cunha A.F."/>
            <person name="Gomes L.H."/>
            <person name="Tavares F.C.A."/>
            <person name="Alcarde A.R."/>
            <person name="Dietrich F.S."/>
            <person name="McCusker J.H."/>
            <person name="Petes T.D."/>
            <person name="Pereira G.A.G."/>
        </authorList>
    </citation>
    <scope>NUCLEOTIDE SEQUENCE [LARGE SCALE GENOMIC DNA]</scope>
    <source>
        <strain>JAY291</strain>
    </source>
</reference>
<comment type="function">
    <text evidence="1">Stationary phase-essential protein not required for growth on nonfermentable carbon sources.</text>
</comment>
<comment type="similarity">
    <text evidence="3">Belongs to the SPG4 family.</text>
</comment>
<gene>
    <name type="primary">SPG4</name>
    <name type="ORF">C1Q_04774</name>
</gene>
<protein>
    <recommendedName>
        <fullName>Stationary phase protein 4</fullName>
    </recommendedName>
</protein>
<proteinExistence type="inferred from homology"/>
<accession>C7GWA2</accession>
<name>SPG4_YEAS2</name>
<feature type="chain" id="PRO_0000405003" description="Stationary phase protein 4">
    <location>
        <begin position="1"/>
        <end position="115"/>
    </location>
</feature>
<feature type="region of interest" description="Disordered" evidence="2">
    <location>
        <begin position="16"/>
        <end position="77"/>
    </location>
</feature>
<feature type="compositionally biased region" description="Polar residues" evidence="2">
    <location>
        <begin position="25"/>
        <end position="37"/>
    </location>
</feature>
<feature type="compositionally biased region" description="Polar residues" evidence="2">
    <location>
        <begin position="50"/>
        <end position="66"/>
    </location>
</feature>
<evidence type="ECO:0000250" key="1"/>
<evidence type="ECO:0000256" key="2">
    <source>
        <dbReference type="SAM" id="MobiDB-lite"/>
    </source>
</evidence>
<evidence type="ECO:0000305" key="3"/>
<sequence length="115" mass="13180">MGSFWDAFAVYDKKKHADPSVYGGNHNNTGDSKTQVMFSKEYRQPRTHQQENLQSMRRSSIGSQDSSDVEDVKEGRLPAEVEIPKNVDISNMSQGEFLRLYESLRRGEPDNKVNR</sequence>
<dbReference type="EMBL" id="ACFL01000380">
    <property type="protein sequence ID" value="EEU04923.1"/>
    <property type="molecule type" value="Genomic_DNA"/>
</dbReference>
<dbReference type="SMR" id="C7GWA2"/>
<dbReference type="Proteomes" id="UP000008073">
    <property type="component" value="Unassembled WGS sequence"/>
</dbReference>
<dbReference type="InterPro" id="IPR020485">
    <property type="entry name" value="Spg4"/>
</dbReference>
<dbReference type="Pfam" id="PF17325">
    <property type="entry name" value="SPG4"/>
    <property type="match status" value="1"/>
</dbReference>